<sequence>MNTTPRIGLGVDVHPIQPGRPCRLLGLLFDDADGCAGHSDGDVGAHALCDAVLSAAGLGDVGAVFGVDDPRWAGVSGADMLRHVADLTARHGFRVGNAAVQVIGNRPKVGPRRAEAQRVLSELLGAPVSVAATTTDGLGLTGRGEGLAAIATALVVPTG</sequence>
<reference key="1">
    <citation type="journal article" date="2005" name="Proc. Natl. Acad. Sci. U.S.A.">
        <title>The complete genome sequence of Mycobacterium avium subspecies paratuberculosis.</title>
        <authorList>
            <person name="Li L."/>
            <person name="Bannantine J.P."/>
            <person name="Zhang Q."/>
            <person name="Amonsin A."/>
            <person name="May B.J."/>
            <person name="Alt D."/>
            <person name="Banerji N."/>
            <person name="Kanjilal S."/>
            <person name="Kapur V."/>
        </authorList>
    </citation>
    <scope>NUCLEOTIDE SEQUENCE [LARGE SCALE GENOMIC DNA]</scope>
    <source>
        <strain>ATCC BAA-968 / K-10</strain>
    </source>
</reference>
<proteinExistence type="inferred from homology"/>
<accession>Q743W4</accession>
<protein>
    <recommendedName>
        <fullName evidence="1">2-C-methyl-D-erythritol 2,4-cyclodiphosphate synthase</fullName>
        <shortName evidence="1">MECDP-synthase</shortName>
        <shortName evidence="1">MECPP-synthase</shortName>
        <shortName evidence="1">MECPS</shortName>
        <ecNumber evidence="1">4.6.1.12</ecNumber>
    </recommendedName>
</protein>
<dbReference type="EC" id="4.6.1.12" evidence="1"/>
<dbReference type="EMBL" id="AE016958">
    <property type="protein sequence ID" value="AAS02794.1"/>
    <property type="molecule type" value="Genomic_DNA"/>
</dbReference>
<dbReference type="RefSeq" id="WP_003875634.1">
    <property type="nucleotide sequence ID" value="NZ_CP106873.1"/>
</dbReference>
<dbReference type="SMR" id="Q743W4"/>
<dbReference type="STRING" id="262316.MAP_0477"/>
<dbReference type="KEGG" id="mpa:MAP_0477"/>
<dbReference type="eggNOG" id="COG0245">
    <property type="taxonomic scope" value="Bacteria"/>
</dbReference>
<dbReference type="HOGENOM" id="CLU_084630_1_0_11"/>
<dbReference type="UniPathway" id="UPA00056">
    <property type="reaction ID" value="UER00095"/>
</dbReference>
<dbReference type="Proteomes" id="UP000000580">
    <property type="component" value="Chromosome"/>
</dbReference>
<dbReference type="GO" id="GO:0008685">
    <property type="term" value="F:2-C-methyl-D-erythritol 2,4-cyclodiphosphate synthase activity"/>
    <property type="evidence" value="ECO:0007669"/>
    <property type="project" value="UniProtKB-UniRule"/>
</dbReference>
<dbReference type="GO" id="GO:0046872">
    <property type="term" value="F:metal ion binding"/>
    <property type="evidence" value="ECO:0007669"/>
    <property type="project" value="UniProtKB-KW"/>
</dbReference>
<dbReference type="GO" id="GO:0019288">
    <property type="term" value="P:isopentenyl diphosphate biosynthetic process, methylerythritol 4-phosphate pathway"/>
    <property type="evidence" value="ECO:0007669"/>
    <property type="project" value="UniProtKB-UniRule"/>
</dbReference>
<dbReference type="GO" id="GO:0016114">
    <property type="term" value="P:terpenoid biosynthetic process"/>
    <property type="evidence" value="ECO:0007669"/>
    <property type="project" value="InterPro"/>
</dbReference>
<dbReference type="CDD" id="cd00554">
    <property type="entry name" value="MECDP_synthase"/>
    <property type="match status" value="1"/>
</dbReference>
<dbReference type="FunFam" id="3.30.1330.50:FF:000003">
    <property type="entry name" value="2-C-methyl-D-erythritol 2,4-cyclodiphosphate synthase"/>
    <property type="match status" value="1"/>
</dbReference>
<dbReference type="Gene3D" id="3.30.1330.50">
    <property type="entry name" value="2-C-methyl-D-erythritol 2,4-cyclodiphosphate synthase"/>
    <property type="match status" value="1"/>
</dbReference>
<dbReference type="HAMAP" id="MF_00107">
    <property type="entry name" value="IspF"/>
    <property type="match status" value="1"/>
</dbReference>
<dbReference type="InterPro" id="IPR003526">
    <property type="entry name" value="MECDP_synthase"/>
</dbReference>
<dbReference type="InterPro" id="IPR020555">
    <property type="entry name" value="MECDP_synthase_CS"/>
</dbReference>
<dbReference type="InterPro" id="IPR036571">
    <property type="entry name" value="MECDP_synthase_sf"/>
</dbReference>
<dbReference type="NCBIfam" id="TIGR00151">
    <property type="entry name" value="ispF"/>
    <property type="match status" value="1"/>
</dbReference>
<dbReference type="PANTHER" id="PTHR43181">
    <property type="entry name" value="2-C-METHYL-D-ERYTHRITOL 2,4-CYCLODIPHOSPHATE SYNTHASE, CHLOROPLASTIC"/>
    <property type="match status" value="1"/>
</dbReference>
<dbReference type="PANTHER" id="PTHR43181:SF1">
    <property type="entry name" value="2-C-METHYL-D-ERYTHRITOL 2,4-CYCLODIPHOSPHATE SYNTHASE, CHLOROPLASTIC"/>
    <property type="match status" value="1"/>
</dbReference>
<dbReference type="Pfam" id="PF02542">
    <property type="entry name" value="YgbB"/>
    <property type="match status" value="1"/>
</dbReference>
<dbReference type="SUPFAM" id="SSF69765">
    <property type="entry name" value="IpsF-like"/>
    <property type="match status" value="1"/>
</dbReference>
<dbReference type="PROSITE" id="PS01350">
    <property type="entry name" value="ISPF"/>
    <property type="match status" value="1"/>
</dbReference>
<gene>
    <name evidence="1" type="primary">ispF</name>
    <name type="ordered locus">MAP_0477</name>
</gene>
<comment type="function">
    <text evidence="1">Involved in the biosynthesis of isopentenyl diphosphate (IPP) and dimethylallyl diphosphate (DMAPP), two major building blocks of isoprenoid compounds. Catalyzes the conversion of 4-diphosphocytidyl-2-C-methyl-D-erythritol 2-phosphate (CDP-ME2P) to 2-C-methyl-D-erythritol 2,4-cyclodiphosphate (ME-CPP) with a corresponding release of cytidine 5-monophosphate (CMP).</text>
</comment>
<comment type="catalytic activity">
    <reaction evidence="1">
        <text>4-CDP-2-C-methyl-D-erythritol 2-phosphate = 2-C-methyl-D-erythritol 2,4-cyclic diphosphate + CMP</text>
        <dbReference type="Rhea" id="RHEA:23864"/>
        <dbReference type="ChEBI" id="CHEBI:57919"/>
        <dbReference type="ChEBI" id="CHEBI:58483"/>
        <dbReference type="ChEBI" id="CHEBI:60377"/>
        <dbReference type="EC" id="4.6.1.12"/>
    </reaction>
</comment>
<comment type="cofactor">
    <cofactor evidence="1">
        <name>a divalent metal cation</name>
        <dbReference type="ChEBI" id="CHEBI:60240"/>
    </cofactor>
    <text evidence="1">Binds 1 divalent metal cation per subunit.</text>
</comment>
<comment type="pathway">
    <text evidence="1">Isoprenoid biosynthesis; isopentenyl diphosphate biosynthesis via DXP pathway; isopentenyl diphosphate from 1-deoxy-D-xylulose 5-phosphate: step 4/6.</text>
</comment>
<comment type="subunit">
    <text evidence="1">Homotrimer.</text>
</comment>
<comment type="similarity">
    <text evidence="1">Belongs to the IspF family.</text>
</comment>
<name>ISPF_MYCPA</name>
<organism>
    <name type="scientific">Mycolicibacterium paratuberculosis (strain ATCC BAA-968 / K-10)</name>
    <name type="common">Mycobacterium paratuberculosis</name>
    <dbReference type="NCBI Taxonomy" id="262316"/>
    <lineage>
        <taxon>Bacteria</taxon>
        <taxon>Bacillati</taxon>
        <taxon>Actinomycetota</taxon>
        <taxon>Actinomycetes</taxon>
        <taxon>Mycobacteriales</taxon>
        <taxon>Mycobacteriaceae</taxon>
        <taxon>Mycobacterium</taxon>
        <taxon>Mycobacterium avium complex (MAC)</taxon>
    </lineage>
</organism>
<keyword id="KW-0414">Isoprene biosynthesis</keyword>
<keyword id="KW-0456">Lyase</keyword>
<keyword id="KW-0479">Metal-binding</keyword>
<keyword id="KW-1185">Reference proteome</keyword>
<feature type="chain" id="PRO_0000189484" description="2-C-methyl-D-erythritol 2,4-cyclodiphosphate synthase">
    <location>
        <begin position="1"/>
        <end position="159"/>
    </location>
</feature>
<feature type="binding site" evidence="1">
    <location>
        <begin position="12"/>
        <end position="14"/>
    </location>
    <ligand>
        <name>4-CDP-2-C-methyl-D-erythritol 2-phosphate</name>
        <dbReference type="ChEBI" id="CHEBI:57919"/>
    </ligand>
</feature>
<feature type="binding site" evidence="1">
    <location>
        <position position="12"/>
    </location>
    <ligand>
        <name>a divalent metal cation</name>
        <dbReference type="ChEBI" id="CHEBI:60240"/>
    </ligand>
</feature>
<feature type="binding site" evidence="1">
    <location>
        <position position="14"/>
    </location>
    <ligand>
        <name>a divalent metal cation</name>
        <dbReference type="ChEBI" id="CHEBI:60240"/>
    </ligand>
</feature>
<feature type="binding site" evidence="1">
    <location>
        <begin position="38"/>
        <end position="39"/>
    </location>
    <ligand>
        <name>4-CDP-2-C-methyl-D-erythritol 2-phosphate</name>
        <dbReference type="ChEBI" id="CHEBI:57919"/>
    </ligand>
</feature>
<feature type="binding site" evidence="1">
    <location>
        <position position="46"/>
    </location>
    <ligand>
        <name>a divalent metal cation</name>
        <dbReference type="ChEBI" id="CHEBI:60240"/>
    </ligand>
</feature>
<feature type="binding site" evidence="1">
    <location>
        <begin position="60"/>
        <end position="62"/>
    </location>
    <ligand>
        <name>4-CDP-2-C-methyl-D-erythritol 2-phosphate</name>
        <dbReference type="ChEBI" id="CHEBI:57919"/>
    </ligand>
</feature>
<feature type="binding site" evidence="1">
    <location>
        <begin position="133"/>
        <end position="136"/>
    </location>
    <ligand>
        <name>4-CDP-2-C-methyl-D-erythritol 2-phosphate</name>
        <dbReference type="ChEBI" id="CHEBI:57919"/>
    </ligand>
</feature>
<feature type="binding site" evidence="1">
    <location>
        <position position="143"/>
    </location>
    <ligand>
        <name>4-CDP-2-C-methyl-D-erythritol 2-phosphate</name>
        <dbReference type="ChEBI" id="CHEBI:57919"/>
    </ligand>
</feature>
<feature type="site" description="Transition state stabilizer" evidence="1">
    <location>
        <position position="38"/>
    </location>
</feature>
<feature type="site" description="Transition state stabilizer" evidence="1">
    <location>
        <position position="134"/>
    </location>
</feature>
<evidence type="ECO:0000255" key="1">
    <source>
        <dbReference type="HAMAP-Rule" id="MF_00107"/>
    </source>
</evidence>